<dbReference type="EC" id="2.1.1.107" evidence="1"/>
<dbReference type="EC" id="1.3.1.76" evidence="1"/>
<dbReference type="EC" id="4.99.1.4" evidence="1"/>
<dbReference type="EMBL" id="AM286415">
    <property type="protein sequence ID" value="CAL10865.1"/>
    <property type="molecule type" value="Genomic_DNA"/>
</dbReference>
<dbReference type="RefSeq" id="WP_011815607.1">
    <property type="nucleotide sequence ID" value="NC_008800.1"/>
</dbReference>
<dbReference type="RefSeq" id="YP_001005104.1">
    <property type="nucleotide sequence ID" value="NC_008800.1"/>
</dbReference>
<dbReference type="SMR" id="A1JJS8"/>
<dbReference type="KEGG" id="yen:YE0761"/>
<dbReference type="PATRIC" id="fig|393305.7.peg.855"/>
<dbReference type="eggNOG" id="COG0007">
    <property type="taxonomic scope" value="Bacteria"/>
</dbReference>
<dbReference type="eggNOG" id="COG1648">
    <property type="taxonomic scope" value="Bacteria"/>
</dbReference>
<dbReference type="HOGENOM" id="CLU_011276_2_0_6"/>
<dbReference type="OrthoDB" id="9815856at2"/>
<dbReference type="UniPathway" id="UPA00148">
    <property type="reaction ID" value="UER00211"/>
</dbReference>
<dbReference type="UniPathway" id="UPA00148">
    <property type="reaction ID" value="UER00222"/>
</dbReference>
<dbReference type="UniPathway" id="UPA00262">
    <property type="reaction ID" value="UER00211"/>
</dbReference>
<dbReference type="UniPathway" id="UPA00262">
    <property type="reaction ID" value="UER00222"/>
</dbReference>
<dbReference type="UniPathway" id="UPA00262">
    <property type="reaction ID" value="UER00376"/>
</dbReference>
<dbReference type="Proteomes" id="UP000000642">
    <property type="component" value="Chromosome"/>
</dbReference>
<dbReference type="GO" id="GO:0051287">
    <property type="term" value="F:NAD binding"/>
    <property type="evidence" value="ECO:0007669"/>
    <property type="project" value="InterPro"/>
</dbReference>
<dbReference type="GO" id="GO:0043115">
    <property type="term" value="F:precorrin-2 dehydrogenase activity"/>
    <property type="evidence" value="ECO:0007669"/>
    <property type="project" value="UniProtKB-UniRule"/>
</dbReference>
<dbReference type="GO" id="GO:0051266">
    <property type="term" value="F:sirohydrochlorin ferrochelatase activity"/>
    <property type="evidence" value="ECO:0007669"/>
    <property type="project" value="UniProtKB-EC"/>
</dbReference>
<dbReference type="GO" id="GO:0004851">
    <property type="term" value="F:uroporphyrin-III C-methyltransferase activity"/>
    <property type="evidence" value="ECO:0007669"/>
    <property type="project" value="UniProtKB-UniRule"/>
</dbReference>
<dbReference type="GO" id="GO:0009236">
    <property type="term" value="P:cobalamin biosynthetic process"/>
    <property type="evidence" value="ECO:0007669"/>
    <property type="project" value="UniProtKB-UniRule"/>
</dbReference>
<dbReference type="GO" id="GO:0032259">
    <property type="term" value="P:methylation"/>
    <property type="evidence" value="ECO:0007669"/>
    <property type="project" value="UniProtKB-KW"/>
</dbReference>
<dbReference type="GO" id="GO:0019354">
    <property type="term" value="P:siroheme biosynthetic process"/>
    <property type="evidence" value="ECO:0007669"/>
    <property type="project" value="UniProtKB-UniRule"/>
</dbReference>
<dbReference type="CDD" id="cd11642">
    <property type="entry name" value="SUMT"/>
    <property type="match status" value="1"/>
</dbReference>
<dbReference type="FunFam" id="3.30.160.110:FF:000001">
    <property type="entry name" value="Siroheme synthase"/>
    <property type="match status" value="1"/>
</dbReference>
<dbReference type="FunFam" id="3.30.950.10:FF:000001">
    <property type="entry name" value="Siroheme synthase"/>
    <property type="match status" value="1"/>
</dbReference>
<dbReference type="FunFam" id="3.40.1010.10:FF:000001">
    <property type="entry name" value="Siroheme synthase"/>
    <property type="match status" value="1"/>
</dbReference>
<dbReference type="Gene3D" id="3.40.1010.10">
    <property type="entry name" value="Cobalt-precorrin-4 Transmethylase, Domain 1"/>
    <property type="match status" value="1"/>
</dbReference>
<dbReference type="Gene3D" id="3.30.950.10">
    <property type="entry name" value="Methyltransferase, Cobalt-precorrin-4 Transmethylase, Domain 2"/>
    <property type="match status" value="1"/>
</dbReference>
<dbReference type="Gene3D" id="3.40.50.720">
    <property type="entry name" value="NAD(P)-binding Rossmann-like Domain"/>
    <property type="match status" value="1"/>
</dbReference>
<dbReference type="Gene3D" id="1.10.8.210">
    <property type="entry name" value="Sirohaem synthase, dimerisation domain"/>
    <property type="match status" value="1"/>
</dbReference>
<dbReference type="Gene3D" id="3.30.160.110">
    <property type="entry name" value="Siroheme synthase, domain 2"/>
    <property type="match status" value="1"/>
</dbReference>
<dbReference type="HAMAP" id="MF_01646">
    <property type="entry name" value="Siroheme_synth"/>
    <property type="match status" value="1"/>
</dbReference>
<dbReference type="InterPro" id="IPR000878">
    <property type="entry name" value="4pyrrol_Mease"/>
</dbReference>
<dbReference type="InterPro" id="IPR035996">
    <property type="entry name" value="4pyrrol_Methylase_sf"/>
</dbReference>
<dbReference type="InterPro" id="IPR014777">
    <property type="entry name" value="4pyrrole_Mease_sub1"/>
</dbReference>
<dbReference type="InterPro" id="IPR014776">
    <property type="entry name" value="4pyrrole_Mease_sub2"/>
</dbReference>
<dbReference type="InterPro" id="IPR006366">
    <property type="entry name" value="CobA/CysG_C"/>
</dbReference>
<dbReference type="InterPro" id="IPR036291">
    <property type="entry name" value="NAD(P)-bd_dom_sf"/>
</dbReference>
<dbReference type="InterPro" id="IPR050161">
    <property type="entry name" value="Siro_Cobalamin_biosynth"/>
</dbReference>
<dbReference type="InterPro" id="IPR037115">
    <property type="entry name" value="Sirohaem_synt_dimer_dom_sf"/>
</dbReference>
<dbReference type="InterPro" id="IPR012409">
    <property type="entry name" value="Sirohaem_synth"/>
</dbReference>
<dbReference type="InterPro" id="IPR028281">
    <property type="entry name" value="Sirohaem_synthase_central"/>
</dbReference>
<dbReference type="InterPro" id="IPR019478">
    <property type="entry name" value="Sirohaem_synthase_dimer_dom"/>
</dbReference>
<dbReference type="InterPro" id="IPR006367">
    <property type="entry name" value="Sirohaem_synthase_N"/>
</dbReference>
<dbReference type="InterPro" id="IPR003043">
    <property type="entry name" value="Uropor_MeTrfase_CS"/>
</dbReference>
<dbReference type="NCBIfam" id="TIGR01469">
    <property type="entry name" value="cobA_cysG_Cterm"/>
    <property type="match status" value="1"/>
</dbReference>
<dbReference type="NCBIfam" id="TIGR01470">
    <property type="entry name" value="cysG_Nterm"/>
    <property type="match status" value="1"/>
</dbReference>
<dbReference type="NCBIfam" id="NF004790">
    <property type="entry name" value="PRK06136.1"/>
    <property type="match status" value="1"/>
</dbReference>
<dbReference type="NCBIfam" id="NF007922">
    <property type="entry name" value="PRK10637.1"/>
    <property type="match status" value="1"/>
</dbReference>
<dbReference type="PANTHER" id="PTHR45790:SF1">
    <property type="entry name" value="SIROHEME SYNTHASE"/>
    <property type="match status" value="1"/>
</dbReference>
<dbReference type="PANTHER" id="PTHR45790">
    <property type="entry name" value="SIROHEME SYNTHASE-RELATED"/>
    <property type="match status" value="1"/>
</dbReference>
<dbReference type="Pfam" id="PF10414">
    <property type="entry name" value="CysG_dimeriser"/>
    <property type="match status" value="1"/>
</dbReference>
<dbReference type="Pfam" id="PF13241">
    <property type="entry name" value="NAD_binding_7"/>
    <property type="match status" value="1"/>
</dbReference>
<dbReference type="Pfam" id="PF14824">
    <property type="entry name" value="Sirohm_synth_M"/>
    <property type="match status" value="1"/>
</dbReference>
<dbReference type="Pfam" id="PF00590">
    <property type="entry name" value="TP_methylase"/>
    <property type="match status" value="1"/>
</dbReference>
<dbReference type="PIRSF" id="PIRSF036426">
    <property type="entry name" value="Sirohaem_synth"/>
    <property type="match status" value="1"/>
</dbReference>
<dbReference type="SUPFAM" id="SSF51735">
    <property type="entry name" value="NAD(P)-binding Rossmann-fold domains"/>
    <property type="match status" value="1"/>
</dbReference>
<dbReference type="SUPFAM" id="SSF75615">
    <property type="entry name" value="Siroheme synthase middle domains-like"/>
    <property type="match status" value="1"/>
</dbReference>
<dbReference type="SUPFAM" id="SSF53790">
    <property type="entry name" value="Tetrapyrrole methylase"/>
    <property type="match status" value="1"/>
</dbReference>
<dbReference type="PROSITE" id="PS00839">
    <property type="entry name" value="SUMT_1"/>
    <property type="match status" value="1"/>
</dbReference>
<dbReference type="PROSITE" id="PS00840">
    <property type="entry name" value="SUMT_2"/>
    <property type="match status" value="1"/>
</dbReference>
<evidence type="ECO:0000255" key="1">
    <source>
        <dbReference type="HAMAP-Rule" id="MF_01646"/>
    </source>
</evidence>
<keyword id="KW-0169">Cobalamin biosynthesis</keyword>
<keyword id="KW-0456">Lyase</keyword>
<keyword id="KW-0489">Methyltransferase</keyword>
<keyword id="KW-0511">Multifunctional enzyme</keyword>
<keyword id="KW-0520">NAD</keyword>
<keyword id="KW-0560">Oxidoreductase</keyword>
<keyword id="KW-0597">Phosphoprotein</keyword>
<keyword id="KW-0627">Porphyrin biosynthesis</keyword>
<keyword id="KW-0949">S-adenosyl-L-methionine</keyword>
<keyword id="KW-0808">Transferase</keyword>
<protein>
    <recommendedName>
        <fullName evidence="1">Siroheme synthase 1</fullName>
    </recommendedName>
    <domain>
        <recommendedName>
            <fullName evidence="1">Uroporphyrinogen-III C-methyltransferase 1</fullName>
            <shortName evidence="1">Urogen III methylase 1</shortName>
            <ecNumber evidence="1">2.1.1.107</ecNumber>
        </recommendedName>
        <alternativeName>
            <fullName evidence="1">SUMT 1</fullName>
        </alternativeName>
        <alternativeName>
            <fullName evidence="1">Uroporphyrinogen III methylase 1</fullName>
            <shortName evidence="1">UROM 1</shortName>
        </alternativeName>
    </domain>
    <domain>
        <recommendedName>
            <fullName evidence="1">Precorrin-2 dehydrogenase 1</fullName>
            <ecNumber evidence="1">1.3.1.76</ecNumber>
        </recommendedName>
    </domain>
    <domain>
        <recommendedName>
            <fullName evidence="1">Sirohydrochlorin ferrochelatase 1</fullName>
            <ecNumber evidence="1">4.99.1.4</ecNumber>
        </recommendedName>
    </domain>
</protein>
<sequence length="472" mass="50883">MDYLPLFADLKRRPVLVVGGGEVAARKIDLLHRAGAQVRVVAQTLSSELEQLHQDGRIHWLALDFLPEQLDEVFLVIAATNDTALNAAVFAAADQRHLLANVVDDQPRCSFIFPSIVDRSPLVVAISSAGQAPVLARILREKLEALLPSSLGDMAAVAGRWRGRVKQHIASMGERRRFWENAFSGRFASLISRGQLAQAEEELQLSLEGQNRNQGEVALVGAGPGDPGLLTLRGLQVIQQADVVLYDHLVSPEVLDLVRRDAQRICVGKRAGAHSVAQEETNQLLVTLAQRGKRVVRLKGGDPFIFGRGGEELQVVARAGIPFHIVPGVTAASGATAYAGIPLTHRDYAQSVTFITGHCRADGDDVDWQALARGRQTLAIYMGTVKAAEISQQLIAHGRASTTPVAVIGRGTRADQQVLTGTLAELELLAHQAPTPALLVIGEVVDLHHQIAWFGQQPQTEQAISPSVVNLA</sequence>
<gene>
    <name evidence="1" type="primary">cysG1</name>
    <name type="ordered locus">YE0761</name>
</gene>
<name>CYSG1_YERE8</name>
<accession>A1JJS8</accession>
<comment type="function">
    <text evidence="1">Multifunctional enzyme that catalyzes the SAM-dependent methylations of uroporphyrinogen III at position C-2 and C-7 to form precorrin-2 via precorrin-1. Then it catalyzes the NAD-dependent ring dehydrogenation of precorrin-2 to yield sirohydrochlorin. Finally, it catalyzes the ferrochelation of sirohydrochlorin to yield siroheme.</text>
</comment>
<comment type="catalytic activity">
    <reaction evidence="1">
        <text>uroporphyrinogen III + 2 S-adenosyl-L-methionine = precorrin-2 + 2 S-adenosyl-L-homocysteine + H(+)</text>
        <dbReference type="Rhea" id="RHEA:32459"/>
        <dbReference type="ChEBI" id="CHEBI:15378"/>
        <dbReference type="ChEBI" id="CHEBI:57308"/>
        <dbReference type="ChEBI" id="CHEBI:57856"/>
        <dbReference type="ChEBI" id="CHEBI:58827"/>
        <dbReference type="ChEBI" id="CHEBI:59789"/>
        <dbReference type="EC" id="2.1.1.107"/>
    </reaction>
</comment>
<comment type="catalytic activity">
    <reaction evidence="1">
        <text>precorrin-2 + NAD(+) = sirohydrochlorin + NADH + 2 H(+)</text>
        <dbReference type="Rhea" id="RHEA:15613"/>
        <dbReference type="ChEBI" id="CHEBI:15378"/>
        <dbReference type="ChEBI" id="CHEBI:57540"/>
        <dbReference type="ChEBI" id="CHEBI:57945"/>
        <dbReference type="ChEBI" id="CHEBI:58351"/>
        <dbReference type="ChEBI" id="CHEBI:58827"/>
        <dbReference type="EC" id="1.3.1.76"/>
    </reaction>
</comment>
<comment type="catalytic activity">
    <reaction evidence="1">
        <text>siroheme + 2 H(+) = sirohydrochlorin + Fe(2+)</text>
        <dbReference type="Rhea" id="RHEA:24360"/>
        <dbReference type="ChEBI" id="CHEBI:15378"/>
        <dbReference type="ChEBI" id="CHEBI:29033"/>
        <dbReference type="ChEBI" id="CHEBI:58351"/>
        <dbReference type="ChEBI" id="CHEBI:60052"/>
        <dbReference type="EC" id="4.99.1.4"/>
    </reaction>
</comment>
<comment type="pathway">
    <text evidence="1">Cofactor biosynthesis; adenosylcobalamin biosynthesis; precorrin-2 from uroporphyrinogen III: step 1/1.</text>
</comment>
<comment type="pathway">
    <text evidence="1">Cofactor biosynthesis; adenosylcobalamin biosynthesis; sirohydrochlorin from precorrin-2: step 1/1.</text>
</comment>
<comment type="pathway">
    <text evidence="1">Porphyrin-containing compound metabolism; siroheme biosynthesis; precorrin-2 from uroporphyrinogen III: step 1/1.</text>
</comment>
<comment type="pathway">
    <text evidence="1">Porphyrin-containing compound metabolism; siroheme biosynthesis; siroheme from sirohydrochlorin: step 1/1.</text>
</comment>
<comment type="pathway">
    <text evidence="1">Porphyrin-containing compound metabolism; siroheme biosynthesis; sirohydrochlorin from precorrin-2: step 1/1.</text>
</comment>
<comment type="similarity">
    <text evidence="1">In the N-terminal section; belongs to the precorrin-2 dehydrogenase / sirohydrochlorin ferrochelatase family.</text>
</comment>
<comment type="similarity">
    <text evidence="1">In the C-terminal section; belongs to the precorrin methyltransferase family.</text>
</comment>
<organism>
    <name type="scientific">Yersinia enterocolitica serotype O:8 / biotype 1B (strain NCTC 13174 / 8081)</name>
    <dbReference type="NCBI Taxonomy" id="393305"/>
    <lineage>
        <taxon>Bacteria</taxon>
        <taxon>Pseudomonadati</taxon>
        <taxon>Pseudomonadota</taxon>
        <taxon>Gammaproteobacteria</taxon>
        <taxon>Enterobacterales</taxon>
        <taxon>Yersiniaceae</taxon>
        <taxon>Yersinia</taxon>
    </lineage>
</organism>
<proteinExistence type="inferred from homology"/>
<feature type="chain" id="PRO_0000330570" description="Siroheme synthase 1">
    <location>
        <begin position="1"/>
        <end position="472"/>
    </location>
</feature>
<feature type="region of interest" description="Precorrin-2 dehydrogenase /sirohydrochlorin ferrochelatase" evidence="1">
    <location>
        <begin position="1"/>
        <end position="203"/>
    </location>
</feature>
<feature type="region of interest" description="Uroporphyrinogen-III C-methyltransferase" evidence="1">
    <location>
        <begin position="215"/>
        <end position="472"/>
    </location>
</feature>
<feature type="active site" description="Proton acceptor" evidence="1">
    <location>
        <position position="247"/>
    </location>
</feature>
<feature type="active site" description="Proton donor" evidence="1">
    <location>
        <position position="269"/>
    </location>
</feature>
<feature type="binding site" evidence="1">
    <location>
        <begin position="22"/>
        <end position="23"/>
    </location>
    <ligand>
        <name>NAD(+)</name>
        <dbReference type="ChEBI" id="CHEBI:57540"/>
    </ligand>
</feature>
<feature type="binding site" evidence="1">
    <location>
        <begin position="43"/>
        <end position="44"/>
    </location>
    <ligand>
        <name>NAD(+)</name>
        <dbReference type="ChEBI" id="CHEBI:57540"/>
    </ligand>
</feature>
<feature type="binding site" evidence="1">
    <location>
        <position position="224"/>
    </location>
    <ligand>
        <name>S-adenosyl-L-methionine</name>
        <dbReference type="ChEBI" id="CHEBI:59789"/>
    </ligand>
</feature>
<feature type="binding site" evidence="1">
    <location>
        <begin position="300"/>
        <end position="302"/>
    </location>
    <ligand>
        <name>S-adenosyl-L-methionine</name>
        <dbReference type="ChEBI" id="CHEBI:59789"/>
    </ligand>
</feature>
<feature type="binding site" evidence="1">
    <location>
        <position position="305"/>
    </location>
    <ligand>
        <name>S-adenosyl-L-methionine</name>
        <dbReference type="ChEBI" id="CHEBI:59789"/>
    </ligand>
</feature>
<feature type="binding site" evidence="1">
    <location>
        <begin position="330"/>
        <end position="331"/>
    </location>
    <ligand>
        <name>S-adenosyl-L-methionine</name>
        <dbReference type="ChEBI" id="CHEBI:59789"/>
    </ligand>
</feature>
<feature type="binding site" evidence="1">
    <location>
        <position position="382"/>
    </location>
    <ligand>
        <name>S-adenosyl-L-methionine</name>
        <dbReference type="ChEBI" id="CHEBI:59789"/>
    </ligand>
</feature>
<feature type="binding site" evidence="1">
    <location>
        <position position="411"/>
    </location>
    <ligand>
        <name>S-adenosyl-L-methionine</name>
        <dbReference type="ChEBI" id="CHEBI:59789"/>
    </ligand>
</feature>
<feature type="modified residue" description="Phosphoserine" evidence="1">
    <location>
        <position position="128"/>
    </location>
</feature>
<reference key="1">
    <citation type="journal article" date="2006" name="PLoS Genet.">
        <title>The complete genome sequence and comparative genome analysis of the high pathogenicity Yersinia enterocolitica strain 8081.</title>
        <authorList>
            <person name="Thomson N.R."/>
            <person name="Howard S."/>
            <person name="Wren B.W."/>
            <person name="Holden M.T.G."/>
            <person name="Crossman L."/>
            <person name="Challis G.L."/>
            <person name="Churcher C."/>
            <person name="Mungall K."/>
            <person name="Brooks K."/>
            <person name="Chillingworth T."/>
            <person name="Feltwell T."/>
            <person name="Abdellah Z."/>
            <person name="Hauser H."/>
            <person name="Jagels K."/>
            <person name="Maddison M."/>
            <person name="Moule S."/>
            <person name="Sanders M."/>
            <person name="Whitehead S."/>
            <person name="Quail M.A."/>
            <person name="Dougan G."/>
            <person name="Parkhill J."/>
            <person name="Prentice M.B."/>
        </authorList>
    </citation>
    <scope>NUCLEOTIDE SEQUENCE [LARGE SCALE GENOMIC DNA]</scope>
    <source>
        <strain>NCTC 13174 / 8081</strain>
    </source>
</reference>